<dbReference type="EC" id="6.3.2.2" evidence="1"/>
<dbReference type="EMBL" id="CP000038">
    <property type="protein sequence ID" value="AAZ89442.1"/>
    <property type="molecule type" value="Genomic_DNA"/>
</dbReference>
<dbReference type="RefSeq" id="WP_000611798.1">
    <property type="nucleotide sequence ID" value="NC_007384.1"/>
</dbReference>
<dbReference type="SMR" id="Q3YYH0"/>
<dbReference type="GeneID" id="93779323"/>
<dbReference type="KEGG" id="ssn:SSON_2832"/>
<dbReference type="HOGENOM" id="CLU_020728_3_0_6"/>
<dbReference type="UniPathway" id="UPA00142">
    <property type="reaction ID" value="UER00209"/>
</dbReference>
<dbReference type="Proteomes" id="UP000002529">
    <property type="component" value="Chromosome"/>
</dbReference>
<dbReference type="GO" id="GO:0005829">
    <property type="term" value="C:cytosol"/>
    <property type="evidence" value="ECO:0007669"/>
    <property type="project" value="TreeGrafter"/>
</dbReference>
<dbReference type="GO" id="GO:0005524">
    <property type="term" value="F:ATP binding"/>
    <property type="evidence" value="ECO:0007669"/>
    <property type="project" value="UniProtKB-KW"/>
</dbReference>
<dbReference type="GO" id="GO:0004357">
    <property type="term" value="F:glutamate-cysteine ligase activity"/>
    <property type="evidence" value="ECO:0007669"/>
    <property type="project" value="UniProtKB-UniRule"/>
</dbReference>
<dbReference type="GO" id="GO:0046872">
    <property type="term" value="F:metal ion binding"/>
    <property type="evidence" value="ECO:0007669"/>
    <property type="project" value="TreeGrafter"/>
</dbReference>
<dbReference type="GO" id="GO:0006750">
    <property type="term" value="P:glutathione biosynthetic process"/>
    <property type="evidence" value="ECO:0007669"/>
    <property type="project" value="UniProtKB-UniRule"/>
</dbReference>
<dbReference type="FunFam" id="3.30.590.20:FF:000001">
    <property type="entry name" value="Glutamate--cysteine ligase"/>
    <property type="match status" value="1"/>
</dbReference>
<dbReference type="Gene3D" id="3.30.590.20">
    <property type="match status" value="1"/>
</dbReference>
<dbReference type="HAMAP" id="MF_00578">
    <property type="entry name" value="Glu_cys_ligase"/>
    <property type="match status" value="1"/>
</dbReference>
<dbReference type="InterPro" id="IPR014746">
    <property type="entry name" value="Gln_synth/guanido_kin_cat_dom"/>
</dbReference>
<dbReference type="InterPro" id="IPR007370">
    <property type="entry name" value="Glu_cys_ligase"/>
</dbReference>
<dbReference type="InterPro" id="IPR006334">
    <property type="entry name" value="Glut_cys_ligase"/>
</dbReference>
<dbReference type="NCBIfam" id="TIGR01434">
    <property type="entry name" value="glu_cys_ligase"/>
    <property type="match status" value="1"/>
</dbReference>
<dbReference type="PANTHER" id="PTHR38761">
    <property type="entry name" value="GLUTAMATE--CYSTEINE LIGASE"/>
    <property type="match status" value="1"/>
</dbReference>
<dbReference type="PANTHER" id="PTHR38761:SF1">
    <property type="entry name" value="GLUTAMATE--CYSTEINE LIGASE"/>
    <property type="match status" value="1"/>
</dbReference>
<dbReference type="Pfam" id="PF04262">
    <property type="entry name" value="Glu_cys_ligase"/>
    <property type="match status" value="1"/>
</dbReference>
<dbReference type="SUPFAM" id="SSF55931">
    <property type="entry name" value="Glutamine synthetase/guanido kinase"/>
    <property type="match status" value="1"/>
</dbReference>
<keyword id="KW-0067">ATP-binding</keyword>
<keyword id="KW-0317">Glutathione biosynthesis</keyword>
<keyword id="KW-0436">Ligase</keyword>
<keyword id="KW-0547">Nucleotide-binding</keyword>
<keyword id="KW-1185">Reference proteome</keyword>
<accession>Q3YYH0</accession>
<comment type="catalytic activity">
    <reaction evidence="1">
        <text>L-cysteine + L-glutamate + ATP = gamma-L-glutamyl-L-cysteine + ADP + phosphate + H(+)</text>
        <dbReference type="Rhea" id="RHEA:13285"/>
        <dbReference type="ChEBI" id="CHEBI:15378"/>
        <dbReference type="ChEBI" id="CHEBI:29985"/>
        <dbReference type="ChEBI" id="CHEBI:30616"/>
        <dbReference type="ChEBI" id="CHEBI:35235"/>
        <dbReference type="ChEBI" id="CHEBI:43474"/>
        <dbReference type="ChEBI" id="CHEBI:58173"/>
        <dbReference type="ChEBI" id="CHEBI:456216"/>
        <dbReference type="EC" id="6.3.2.2"/>
    </reaction>
</comment>
<comment type="pathway">
    <text evidence="1">Sulfur metabolism; glutathione biosynthesis; glutathione from L-cysteine and L-glutamate: step 1/2.</text>
</comment>
<comment type="similarity">
    <text evidence="1">Belongs to the glutamate--cysteine ligase type 1 family. Type 1 subfamily.</text>
</comment>
<gene>
    <name evidence="1" type="primary">gshA</name>
    <name type="ordered locus">SSON_2832</name>
</gene>
<reference key="1">
    <citation type="journal article" date="2005" name="Nucleic Acids Res.">
        <title>Genome dynamics and diversity of Shigella species, the etiologic agents of bacillary dysentery.</title>
        <authorList>
            <person name="Yang F."/>
            <person name="Yang J."/>
            <person name="Zhang X."/>
            <person name="Chen L."/>
            <person name="Jiang Y."/>
            <person name="Yan Y."/>
            <person name="Tang X."/>
            <person name="Wang J."/>
            <person name="Xiong Z."/>
            <person name="Dong J."/>
            <person name="Xue Y."/>
            <person name="Zhu Y."/>
            <person name="Xu X."/>
            <person name="Sun L."/>
            <person name="Chen S."/>
            <person name="Nie H."/>
            <person name="Peng J."/>
            <person name="Xu J."/>
            <person name="Wang Y."/>
            <person name="Yuan Z."/>
            <person name="Wen Y."/>
            <person name="Yao Z."/>
            <person name="Shen Y."/>
            <person name="Qiang B."/>
            <person name="Hou Y."/>
            <person name="Yu J."/>
            <person name="Jin Q."/>
        </authorList>
    </citation>
    <scope>NUCLEOTIDE SEQUENCE [LARGE SCALE GENOMIC DNA]</scope>
    <source>
        <strain>Ss046</strain>
    </source>
</reference>
<name>GSH1_SHISS</name>
<sequence length="518" mass="58331">MIPDVSQALAWLEKHPQALKGIQRGLERETLRVNADGTLATTGHPEALGSALTHKWITTDFAEALLEFITPVDGDIEHMLTFMRDLHRYTARNMGDERMWPLSMPCYIAEGQDIELAQYGTSNTGRFKTLYREGLKNRYGALMQTISGVHYNFSLPMAFWQAKCGDISGADAKEKISAGYFRVIRNYYRFGWVIPYLFGASPAICSSFLQGKPTSLPFEKTECGMYYLPYATSLRLSDLGYTNKSQSNLGITFNDLYEYVAGLKQAIKTPSEEYAKIGIEKDGKRLQINSNVLQIENELYAPIRPKRVTRSGESPSDALLRGGIEYIEVRSLDINPFSPIGVDEQQVRFLDLFMVWCALADAPEMSSSELACTRVNWNRVILEGRKPGLTLGIGCETAQFPLLQVGKDLFRDLKRVAQTLDSINGGDAYQKVCDELVACFDNPDLTFSARILRSMIDTGIGGTGKAFAEAYRNLLREEPLEILREEDFVAEREASERRQQEMETADTEPFAVWLEKHT</sequence>
<feature type="chain" id="PRO_1000025190" description="Glutamate--cysteine ligase">
    <location>
        <begin position="1"/>
        <end position="518"/>
    </location>
</feature>
<proteinExistence type="inferred from homology"/>
<organism>
    <name type="scientific">Shigella sonnei (strain Ss046)</name>
    <dbReference type="NCBI Taxonomy" id="300269"/>
    <lineage>
        <taxon>Bacteria</taxon>
        <taxon>Pseudomonadati</taxon>
        <taxon>Pseudomonadota</taxon>
        <taxon>Gammaproteobacteria</taxon>
        <taxon>Enterobacterales</taxon>
        <taxon>Enterobacteriaceae</taxon>
        <taxon>Shigella</taxon>
    </lineage>
</organism>
<evidence type="ECO:0000255" key="1">
    <source>
        <dbReference type="HAMAP-Rule" id="MF_00578"/>
    </source>
</evidence>
<protein>
    <recommendedName>
        <fullName evidence="1">Glutamate--cysteine ligase</fullName>
        <ecNumber evidence="1">6.3.2.2</ecNumber>
    </recommendedName>
    <alternativeName>
        <fullName evidence="1">Gamma-ECS</fullName>
        <shortName evidence="1">GCS</shortName>
    </alternativeName>
    <alternativeName>
        <fullName evidence="1">Gamma-glutamylcysteine synthetase</fullName>
    </alternativeName>
</protein>